<keyword id="KW-0010">Activator</keyword>
<keyword id="KW-0014">AIDS</keyword>
<keyword id="KW-0053">Apoptosis</keyword>
<keyword id="KW-0131">Cell cycle</keyword>
<keyword id="KW-1079">Host G2/M cell cycle arrest by virus</keyword>
<keyword id="KW-1048">Host nucleus</keyword>
<keyword id="KW-0945">Host-virus interaction</keyword>
<keyword id="KW-0407">Ion channel</keyword>
<keyword id="KW-0406">Ion transport</keyword>
<keyword id="KW-1121">Modulation of host cell cycle by virus</keyword>
<keyword id="KW-0597">Phosphoprotein</keyword>
<keyword id="KW-0804">Transcription</keyword>
<keyword id="KW-0805">Transcription regulation</keyword>
<keyword id="KW-0813">Transport</keyword>
<keyword id="KW-1163">Viral penetration into host nucleus</keyword>
<keyword id="KW-0946">Virion</keyword>
<keyword id="KW-1160">Virus entry into host cell</keyword>
<organism>
    <name type="scientific">Human immunodeficiency virus type 1 group M subtype D (isolate Z2/CDC-Z34)</name>
    <name type="common">HIV-1</name>
    <dbReference type="NCBI Taxonomy" id="11683"/>
    <lineage>
        <taxon>Viruses</taxon>
        <taxon>Riboviria</taxon>
        <taxon>Pararnavirae</taxon>
        <taxon>Artverviricota</taxon>
        <taxon>Revtraviricetes</taxon>
        <taxon>Ortervirales</taxon>
        <taxon>Retroviridae</taxon>
        <taxon>Orthoretrovirinae</taxon>
        <taxon>Lentivirus</taxon>
        <taxon>Human immunodeficiency virus type 1</taxon>
    </lineage>
</organism>
<comment type="function">
    <text evidence="1">During virus replication, may deplete host UNG protein, and incude G2-M cell cycle arrest. Acts by targeting specific host proteins for degradation by the 26S proteasome, through association with the cellular CUL4A-DDB1 E3 ligase complex by direct interaction with host VPRPB/DCAF-1. Cell cycle arrest reportedly occurs within hours of infection and is not blocked by antiviral agents, suggesting that it is initiated by the VPR carried into the virion. Additionally, VPR induces apoptosis in a cell cycle dependent manner suggesting that these two effects are mechanistically linked. Detected in the serum and cerebrospinal fluid of AIDS patient, VPR may also induce cell death to bystander cells.</text>
</comment>
<comment type="function">
    <text evidence="1">During virus entry, plays a role in the transport of the viral pre-integration (PIC) complex to the host nucleus. This function is crucial for viral infection of non-dividing macrophages. May act directly at the nuclear pore complex, by binding nucleoporins phenylalanine-glycine (FG)-repeat regions.</text>
</comment>
<comment type="subunit">
    <text evidence="1">Homooligomer, may form homodimer. Interacts with p6-gag region of the Pr55 Gag precursor protein through a (Leu-X-X)4 motif near the C-terminus of the P6gag protein. Interacts with host UNG. May interact with host RAD23A/HHR23A. Interacts with host VPRBP/DCAF1, leading to hijack the CUL4A-RBX1-DDB1-DCAF1/VPRBP complex, mediating ubiquitination of host proteins such as TERT and ZGPAT and arrest of the cell cycle in G2 phase.</text>
</comment>
<comment type="subcellular location">
    <subcellularLocation>
        <location evidence="1">Virion</location>
    </subcellularLocation>
    <subcellularLocation>
        <location evidence="1">Host nucleus</location>
    </subcellularLocation>
    <subcellularLocation>
        <location evidence="1">Host extracellular space</location>
    </subcellularLocation>
    <text evidence="1">Incorporation into virion is dependent on p6 GAG sequences. Lacks a canonical nuclear localization signal, thus import into nucleus may function independently of the human importin pathway. Detected in high quantity in the serum and cerebrospinal fluid of AIDS patient.</text>
</comment>
<comment type="PTM">
    <text evidence="1">Phosphorylated on several residues by host. These phosphorylations regulate VPR activity for the nuclear import of the HIV-1 pre-integration complex.</text>
</comment>
<comment type="miscellaneous">
    <text evidence="1">HIV-1 lineages are divided in three main groups, M (for Major), O (for Outlier), and N (for New, or Non-M, Non-O). The vast majority of strains found worldwide belong to the group M. Group O seems to be endemic to and largely confined to Cameroon and neighboring countries in West Central Africa, where these viruses represent a small minority of HIV-1 strains. The group N is represented by a limited number of isolates from Cameroonian persons. The group M is further subdivided in 9 clades or subtypes (A to D, F to H, J and K).</text>
</comment>
<comment type="similarity">
    <text evidence="1">Belongs to the HIV-1 VPR protein family.</text>
</comment>
<gene>
    <name evidence="1" type="primary">vpr</name>
</gene>
<feature type="chain" id="PRO_0000085437" description="Protein Vpr">
    <location>
        <begin position="1"/>
        <end position="96"/>
    </location>
</feature>
<feature type="region of interest" description="Homooligomerization" evidence="1">
    <location>
        <begin position="1"/>
        <end position="42"/>
    </location>
</feature>
<feature type="modified residue" description="Phosphoserine; by host" evidence="1">
    <location>
        <position position="79"/>
    </location>
</feature>
<feature type="modified residue" description="Phosphoserine; by host" evidence="1">
    <location>
        <position position="94"/>
    </location>
</feature>
<feature type="modified residue" description="Phosphoserine; by host" evidence="1">
    <location>
        <position position="96"/>
    </location>
</feature>
<name>VPR_HV1Z2</name>
<dbReference type="EMBL" id="M22639">
    <property type="protein sequence ID" value="AAA45368.1"/>
    <property type="molecule type" value="Genomic_RNA"/>
</dbReference>
<dbReference type="PIR" id="S54380">
    <property type="entry name" value="S54380"/>
</dbReference>
<dbReference type="BMRB" id="P12519"/>
<dbReference type="SMR" id="P12519"/>
<dbReference type="Proteomes" id="UP000155099">
    <property type="component" value="Genome"/>
</dbReference>
<dbReference type="GO" id="GO:0043657">
    <property type="term" value="C:host cell"/>
    <property type="evidence" value="ECO:0007669"/>
    <property type="project" value="GOC"/>
</dbReference>
<dbReference type="GO" id="GO:0042025">
    <property type="term" value="C:host cell nucleus"/>
    <property type="evidence" value="ECO:0007669"/>
    <property type="project" value="UniProtKB-SubCell"/>
</dbReference>
<dbReference type="GO" id="GO:0043655">
    <property type="term" value="C:host extracellular space"/>
    <property type="evidence" value="ECO:0007669"/>
    <property type="project" value="UniProtKB-SubCell"/>
</dbReference>
<dbReference type="GO" id="GO:0044423">
    <property type="term" value="C:virion component"/>
    <property type="evidence" value="ECO:0007669"/>
    <property type="project" value="UniProtKB-UniRule"/>
</dbReference>
<dbReference type="GO" id="GO:0006351">
    <property type="term" value="P:DNA-templated transcription"/>
    <property type="evidence" value="ECO:0007669"/>
    <property type="project" value="UniProtKB-UniRule"/>
</dbReference>
<dbReference type="GO" id="GO:0034220">
    <property type="term" value="P:monoatomic ion transmembrane transport"/>
    <property type="evidence" value="ECO:0007669"/>
    <property type="project" value="UniProtKB-KW"/>
</dbReference>
<dbReference type="GO" id="GO:0051260">
    <property type="term" value="P:protein homooligomerization"/>
    <property type="evidence" value="ECO:0007669"/>
    <property type="project" value="UniProtKB-UniRule"/>
</dbReference>
<dbReference type="GO" id="GO:0006355">
    <property type="term" value="P:regulation of DNA-templated transcription"/>
    <property type="evidence" value="ECO:0007669"/>
    <property type="project" value="UniProtKB-UniRule"/>
</dbReference>
<dbReference type="GO" id="GO:0046718">
    <property type="term" value="P:symbiont entry into host cell"/>
    <property type="evidence" value="ECO:0007669"/>
    <property type="project" value="UniProtKB-KW"/>
</dbReference>
<dbReference type="GO" id="GO:0052151">
    <property type="term" value="P:symbiont-mediated activation of host apoptosis"/>
    <property type="evidence" value="ECO:0007669"/>
    <property type="project" value="UniProtKB-UniRule"/>
</dbReference>
<dbReference type="GO" id="GO:0039592">
    <property type="term" value="P:symbiont-mediated arrest of host cell cycle during G2/M transition"/>
    <property type="evidence" value="ECO:0007669"/>
    <property type="project" value="UniProtKB-UniRule"/>
</dbReference>
<dbReference type="GO" id="GO:0075732">
    <property type="term" value="P:viral penetration into host nucleus"/>
    <property type="evidence" value="ECO:0007669"/>
    <property type="project" value="UniProtKB-UniRule"/>
</dbReference>
<dbReference type="FunFam" id="1.20.5.90:FF:000001">
    <property type="entry name" value="Protein Vpr"/>
    <property type="match status" value="1"/>
</dbReference>
<dbReference type="Gene3D" id="6.10.210.10">
    <property type="match status" value="1"/>
</dbReference>
<dbReference type="Gene3D" id="1.20.5.90">
    <property type="entry name" value="VpR/VpX protein, C-terminal domain"/>
    <property type="match status" value="1"/>
</dbReference>
<dbReference type="HAMAP" id="MF_04080">
    <property type="entry name" value="HIV_VPR"/>
    <property type="match status" value="1"/>
</dbReference>
<dbReference type="InterPro" id="IPR000012">
    <property type="entry name" value="RetroV_VpR/X"/>
</dbReference>
<dbReference type="Pfam" id="PF00522">
    <property type="entry name" value="VPR"/>
    <property type="match status" value="1"/>
</dbReference>
<dbReference type="PRINTS" id="PR00444">
    <property type="entry name" value="HIVVPRVPX"/>
</dbReference>
<protein>
    <recommendedName>
        <fullName evidence="1">Protein Vpr</fullName>
    </recommendedName>
    <alternativeName>
        <fullName evidence="1">R ORF protein</fullName>
    </alternativeName>
    <alternativeName>
        <fullName evidence="1">Viral protein R</fullName>
    </alternativeName>
</protein>
<organismHost>
    <name type="scientific">Homo sapiens</name>
    <name type="common">Human</name>
    <dbReference type="NCBI Taxonomy" id="9606"/>
</organismHost>
<sequence>MEQAPEDQGPQREPYNEWTLELLEELKSEAVRHFPRIWLHSLGQYIYETYGDTWAGVEALIRILQQLLFIHFRIGCQHSRIGITRQRRARNGSSRS</sequence>
<accession>P12519</accession>
<evidence type="ECO:0000255" key="1">
    <source>
        <dbReference type="HAMAP-Rule" id="MF_04080"/>
    </source>
</evidence>
<reference key="1">
    <citation type="submission" date="1989-07" db="EMBL/GenBank/DDBJ databases">
        <authorList>
            <person name="Theodore T."/>
            <person name="Buckler-White A.J."/>
        </authorList>
    </citation>
    <scope>NUCLEOTIDE SEQUENCE [GENOMIC RNA]</scope>
</reference>
<proteinExistence type="inferred from homology"/>